<reference key="1">
    <citation type="submission" date="2006-08" db="EMBL/GenBank/DDBJ databases">
        <title>Complete sequence of chromosome 1 of Shewanella sp. MR-7.</title>
        <authorList>
            <person name="Copeland A."/>
            <person name="Lucas S."/>
            <person name="Lapidus A."/>
            <person name="Barry K."/>
            <person name="Detter J.C."/>
            <person name="Glavina del Rio T."/>
            <person name="Hammon N."/>
            <person name="Israni S."/>
            <person name="Dalin E."/>
            <person name="Tice H."/>
            <person name="Pitluck S."/>
            <person name="Kiss H."/>
            <person name="Brettin T."/>
            <person name="Bruce D."/>
            <person name="Han C."/>
            <person name="Tapia R."/>
            <person name="Gilna P."/>
            <person name="Schmutz J."/>
            <person name="Larimer F."/>
            <person name="Land M."/>
            <person name="Hauser L."/>
            <person name="Kyrpides N."/>
            <person name="Mikhailova N."/>
            <person name="Nealson K."/>
            <person name="Konstantinidis K."/>
            <person name="Klappenbach J."/>
            <person name="Tiedje J."/>
            <person name="Richardson P."/>
        </authorList>
    </citation>
    <scope>NUCLEOTIDE SEQUENCE [LARGE SCALE GENOMIC DNA]</scope>
    <source>
        <strain>MR-7</strain>
    </source>
</reference>
<sequence length="469" mass="52474">MTTKTRFAPSPTGFLHVGGARTALYSWLQARANNGEFVLRIEDTDIERSTQAACDAILEGMNWLGLTWDEGPYYQTKRFDRYNEIIAQMLEQGTAYKCYCSRERIDALREAQAANGEAQKYDGCCRDLPARDTDEPFVVRFKNPIGGSVVFDDHVRGRIEFSNDALDDLIIARTDGVPTYNFCVVVDDWDMGITCVVRGEDHINNTPRQINILKALGAPIPEYAHVSMILGDDGAKLSKRHGAVSVMQYRDDGYLPEALLNYLVRLGWSHGDQEVFSLEEMKQLFKLDDINKAPSAFNTEKLVWLNQHYIKTLDPEYVASHLQWHMDDQKIDTSNGPALSAVVTALAERAKTLKELAASSRYFYEDFAEFDAEQAKKHLRGVALEPLQLVQQKLAALTEWTVEAIHQAIEATATELEVGMGKVGMPLRVAVTGAGQSPGLDITLFLIGKARSEQRISKAIEFVADRINS</sequence>
<dbReference type="EC" id="6.1.1.17" evidence="1"/>
<dbReference type="EMBL" id="CP000444">
    <property type="protein sequence ID" value="ABI42429.1"/>
    <property type="molecule type" value="Genomic_DNA"/>
</dbReference>
<dbReference type="SMR" id="Q0HWS6"/>
<dbReference type="KEGG" id="shm:Shewmr7_1430"/>
<dbReference type="HOGENOM" id="CLU_015768_6_3_6"/>
<dbReference type="GO" id="GO:0005829">
    <property type="term" value="C:cytosol"/>
    <property type="evidence" value="ECO:0007669"/>
    <property type="project" value="TreeGrafter"/>
</dbReference>
<dbReference type="GO" id="GO:0005524">
    <property type="term" value="F:ATP binding"/>
    <property type="evidence" value="ECO:0007669"/>
    <property type="project" value="UniProtKB-UniRule"/>
</dbReference>
<dbReference type="GO" id="GO:0004818">
    <property type="term" value="F:glutamate-tRNA ligase activity"/>
    <property type="evidence" value="ECO:0007669"/>
    <property type="project" value="UniProtKB-UniRule"/>
</dbReference>
<dbReference type="GO" id="GO:0000049">
    <property type="term" value="F:tRNA binding"/>
    <property type="evidence" value="ECO:0007669"/>
    <property type="project" value="InterPro"/>
</dbReference>
<dbReference type="GO" id="GO:0008270">
    <property type="term" value="F:zinc ion binding"/>
    <property type="evidence" value="ECO:0007669"/>
    <property type="project" value="UniProtKB-UniRule"/>
</dbReference>
<dbReference type="GO" id="GO:0006424">
    <property type="term" value="P:glutamyl-tRNA aminoacylation"/>
    <property type="evidence" value="ECO:0007669"/>
    <property type="project" value="UniProtKB-UniRule"/>
</dbReference>
<dbReference type="CDD" id="cd00808">
    <property type="entry name" value="GluRS_core"/>
    <property type="match status" value="1"/>
</dbReference>
<dbReference type="FunFam" id="1.10.10.350:FF:000001">
    <property type="entry name" value="Glutamate--tRNA ligase"/>
    <property type="match status" value="1"/>
</dbReference>
<dbReference type="FunFam" id="3.40.50.620:FF:000007">
    <property type="entry name" value="Glutamate--tRNA ligase"/>
    <property type="match status" value="1"/>
</dbReference>
<dbReference type="Gene3D" id="1.10.10.350">
    <property type="match status" value="1"/>
</dbReference>
<dbReference type="Gene3D" id="3.40.50.620">
    <property type="entry name" value="HUPs"/>
    <property type="match status" value="1"/>
</dbReference>
<dbReference type="HAMAP" id="MF_00022">
    <property type="entry name" value="Glu_tRNA_synth_type1"/>
    <property type="match status" value="1"/>
</dbReference>
<dbReference type="InterPro" id="IPR045462">
    <property type="entry name" value="aa-tRNA-synth_I_cd-bd"/>
</dbReference>
<dbReference type="InterPro" id="IPR020751">
    <property type="entry name" value="aa-tRNA-synth_I_codon-bd_sub2"/>
</dbReference>
<dbReference type="InterPro" id="IPR001412">
    <property type="entry name" value="aa-tRNA-synth_I_CS"/>
</dbReference>
<dbReference type="InterPro" id="IPR008925">
    <property type="entry name" value="aa_tRNA-synth_I_cd-bd_sf"/>
</dbReference>
<dbReference type="InterPro" id="IPR004527">
    <property type="entry name" value="Glu-tRNA-ligase_bac/mito"/>
</dbReference>
<dbReference type="InterPro" id="IPR000924">
    <property type="entry name" value="Glu/Gln-tRNA-synth"/>
</dbReference>
<dbReference type="InterPro" id="IPR020058">
    <property type="entry name" value="Glu/Gln-tRNA-synth_Ib_cat-dom"/>
</dbReference>
<dbReference type="InterPro" id="IPR049940">
    <property type="entry name" value="GluQ/Sye"/>
</dbReference>
<dbReference type="InterPro" id="IPR033910">
    <property type="entry name" value="GluRS_core"/>
</dbReference>
<dbReference type="InterPro" id="IPR014729">
    <property type="entry name" value="Rossmann-like_a/b/a_fold"/>
</dbReference>
<dbReference type="NCBIfam" id="TIGR00464">
    <property type="entry name" value="gltX_bact"/>
    <property type="match status" value="1"/>
</dbReference>
<dbReference type="PANTHER" id="PTHR43311">
    <property type="entry name" value="GLUTAMATE--TRNA LIGASE"/>
    <property type="match status" value="1"/>
</dbReference>
<dbReference type="PANTHER" id="PTHR43311:SF2">
    <property type="entry name" value="GLUTAMATE--TRNA LIGASE, MITOCHONDRIAL-RELATED"/>
    <property type="match status" value="1"/>
</dbReference>
<dbReference type="Pfam" id="PF19269">
    <property type="entry name" value="Anticodon_2"/>
    <property type="match status" value="1"/>
</dbReference>
<dbReference type="Pfam" id="PF00749">
    <property type="entry name" value="tRNA-synt_1c"/>
    <property type="match status" value="1"/>
</dbReference>
<dbReference type="PRINTS" id="PR00987">
    <property type="entry name" value="TRNASYNTHGLU"/>
</dbReference>
<dbReference type="SUPFAM" id="SSF48163">
    <property type="entry name" value="An anticodon-binding domain of class I aminoacyl-tRNA synthetases"/>
    <property type="match status" value="1"/>
</dbReference>
<dbReference type="SUPFAM" id="SSF52374">
    <property type="entry name" value="Nucleotidylyl transferase"/>
    <property type="match status" value="1"/>
</dbReference>
<dbReference type="PROSITE" id="PS00178">
    <property type="entry name" value="AA_TRNA_LIGASE_I"/>
    <property type="match status" value="1"/>
</dbReference>
<protein>
    <recommendedName>
        <fullName evidence="1">Glutamate--tRNA ligase</fullName>
        <ecNumber evidence="1">6.1.1.17</ecNumber>
    </recommendedName>
    <alternativeName>
        <fullName evidence="1">Glutamyl-tRNA synthetase</fullName>
        <shortName evidence="1">GluRS</shortName>
    </alternativeName>
</protein>
<proteinExistence type="inferred from homology"/>
<comment type="function">
    <text evidence="1">Catalyzes the attachment of glutamate to tRNA(Glu) in a two-step reaction: glutamate is first activated by ATP to form Glu-AMP and then transferred to the acceptor end of tRNA(Glu).</text>
</comment>
<comment type="catalytic activity">
    <reaction evidence="1">
        <text>tRNA(Glu) + L-glutamate + ATP = L-glutamyl-tRNA(Glu) + AMP + diphosphate</text>
        <dbReference type="Rhea" id="RHEA:23540"/>
        <dbReference type="Rhea" id="RHEA-COMP:9663"/>
        <dbReference type="Rhea" id="RHEA-COMP:9680"/>
        <dbReference type="ChEBI" id="CHEBI:29985"/>
        <dbReference type="ChEBI" id="CHEBI:30616"/>
        <dbReference type="ChEBI" id="CHEBI:33019"/>
        <dbReference type="ChEBI" id="CHEBI:78442"/>
        <dbReference type="ChEBI" id="CHEBI:78520"/>
        <dbReference type="ChEBI" id="CHEBI:456215"/>
        <dbReference type="EC" id="6.1.1.17"/>
    </reaction>
</comment>
<comment type="cofactor">
    <cofactor evidence="1">
        <name>Zn(2+)</name>
        <dbReference type="ChEBI" id="CHEBI:29105"/>
    </cofactor>
    <text evidence="1">Binds 1 zinc ion per subunit.</text>
</comment>
<comment type="subunit">
    <text evidence="1">Monomer.</text>
</comment>
<comment type="subcellular location">
    <subcellularLocation>
        <location evidence="1">Cytoplasm</location>
    </subcellularLocation>
</comment>
<comment type="similarity">
    <text evidence="1">Belongs to the class-I aminoacyl-tRNA synthetase family. Glutamate--tRNA ligase type 1 subfamily.</text>
</comment>
<feature type="chain" id="PRO_1000001963" description="Glutamate--tRNA ligase">
    <location>
        <begin position="1"/>
        <end position="469"/>
    </location>
</feature>
<feature type="short sequence motif" description="'HIGH' region" evidence="1">
    <location>
        <begin position="9"/>
        <end position="19"/>
    </location>
</feature>
<feature type="short sequence motif" description="'KMSKS' region" evidence="1">
    <location>
        <begin position="236"/>
        <end position="240"/>
    </location>
</feature>
<feature type="binding site" evidence="1">
    <location>
        <position position="98"/>
    </location>
    <ligand>
        <name>Zn(2+)</name>
        <dbReference type="ChEBI" id="CHEBI:29105"/>
    </ligand>
</feature>
<feature type="binding site" evidence="1">
    <location>
        <position position="100"/>
    </location>
    <ligand>
        <name>Zn(2+)</name>
        <dbReference type="ChEBI" id="CHEBI:29105"/>
    </ligand>
</feature>
<feature type="binding site" evidence="1">
    <location>
        <position position="125"/>
    </location>
    <ligand>
        <name>Zn(2+)</name>
        <dbReference type="ChEBI" id="CHEBI:29105"/>
    </ligand>
</feature>
<feature type="binding site" evidence="1">
    <location>
        <position position="127"/>
    </location>
    <ligand>
        <name>Zn(2+)</name>
        <dbReference type="ChEBI" id="CHEBI:29105"/>
    </ligand>
</feature>
<feature type="binding site" evidence="1">
    <location>
        <position position="239"/>
    </location>
    <ligand>
        <name>ATP</name>
        <dbReference type="ChEBI" id="CHEBI:30616"/>
    </ligand>
</feature>
<name>SYE_SHESR</name>
<keyword id="KW-0030">Aminoacyl-tRNA synthetase</keyword>
<keyword id="KW-0067">ATP-binding</keyword>
<keyword id="KW-0963">Cytoplasm</keyword>
<keyword id="KW-0436">Ligase</keyword>
<keyword id="KW-0479">Metal-binding</keyword>
<keyword id="KW-0547">Nucleotide-binding</keyword>
<keyword id="KW-0648">Protein biosynthesis</keyword>
<keyword id="KW-0862">Zinc</keyword>
<evidence type="ECO:0000255" key="1">
    <source>
        <dbReference type="HAMAP-Rule" id="MF_00022"/>
    </source>
</evidence>
<organism>
    <name type="scientific">Shewanella sp. (strain MR-7)</name>
    <dbReference type="NCBI Taxonomy" id="60481"/>
    <lineage>
        <taxon>Bacteria</taxon>
        <taxon>Pseudomonadati</taxon>
        <taxon>Pseudomonadota</taxon>
        <taxon>Gammaproteobacteria</taxon>
        <taxon>Alteromonadales</taxon>
        <taxon>Shewanellaceae</taxon>
        <taxon>Shewanella</taxon>
    </lineage>
</organism>
<gene>
    <name evidence="1" type="primary">gltX</name>
    <name type="ordered locus">Shewmr7_1430</name>
</gene>
<accession>Q0HWS6</accession>